<dbReference type="EC" id="5.1.1.7" evidence="1"/>
<dbReference type="EMBL" id="CP001130">
    <property type="protein sequence ID" value="ACG57851.1"/>
    <property type="molecule type" value="Genomic_DNA"/>
</dbReference>
<dbReference type="RefSeq" id="WP_012514207.1">
    <property type="nucleotide sequence ID" value="NC_011126.1"/>
</dbReference>
<dbReference type="SMR" id="B4U9P0"/>
<dbReference type="STRING" id="380749.HY04AAS1_1165"/>
<dbReference type="KEGG" id="hya:HY04AAS1_1165"/>
<dbReference type="eggNOG" id="COG0253">
    <property type="taxonomic scope" value="Bacteria"/>
</dbReference>
<dbReference type="HOGENOM" id="CLU_053306_3_2_0"/>
<dbReference type="OrthoDB" id="9805408at2"/>
<dbReference type="UniPathway" id="UPA00034">
    <property type="reaction ID" value="UER00025"/>
</dbReference>
<dbReference type="GO" id="GO:0005829">
    <property type="term" value="C:cytosol"/>
    <property type="evidence" value="ECO:0007669"/>
    <property type="project" value="TreeGrafter"/>
</dbReference>
<dbReference type="GO" id="GO:0008837">
    <property type="term" value="F:diaminopimelate epimerase activity"/>
    <property type="evidence" value="ECO:0007669"/>
    <property type="project" value="UniProtKB-UniRule"/>
</dbReference>
<dbReference type="GO" id="GO:0009089">
    <property type="term" value="P:lysine biosynthetic process via diaminopimelate"/>
    <property type="evidence" value="ECO:0007669"/>
    <property type="project" value="UniProtKB-UniRule"/>
</dbReference>
<dbReference type="Gene3D" id="3.10.310.10">
    <property type="entry name" value="Diaminopimelate Epimerase, Chain A, domain 1"/>
    <property type="match status" value="2"/>
</dbReference>
<dbReference type="HAMAP" id="MF_00197">
    <property type="entry name" value="DAP_epimerase"/>
    <property type="match status" value="1"/>
</dbReference>
<dbReference type="InterPro" id="IPR018510">
    <property type="entry name" value="DAP_epimerase_AS"/>
</dbReference>
<dbReference type="InterPro" id="IPR001653">
    <property type="entry name" value="DAP_epimerase_DapF"/>
</dbReference>
<dbReference type="NCBIfam" id="TIGR00652">
    <property type="entry name" value="DapF"/>
    <property type="match status" value="1"/>
</dbReference>
<dbReference type="PANTHER" id="PTHR31689:SF0">
    <property type="entry name" value="DIAMINOPIMELATE EPIMERASE"/>
    <property type="match status" value="1"/>
</dbReference>
<dbReference type="PANTHER" id="PTHR31689">
    <property type="entry name" value="DIAMINOPIMELATE EPIMERASE, CHLOROPLASTIC"/>
    <property type="match status" value="1"/>
</dbReference>
<dbReference type="Pfam" id="PF01678">
    <property type="entry name" value="DAP_epimerase"/>
    <property type="match status" value="2"/>
</dbReference>
<dbReference type="SUPFAM" id="SSF54506">
    <property type="entry name" value="Diaminopimelate epimerase-like"/>
    <property type="match status" value="2"/>
</dbReference>
<dbReference type="PROSITE" id="PS01326">
    <property type="entry name" value="DAP_EPIMERASE"/>
    <property type="match status" value="1"/>
</dbReference>
<gene>
    <name evidence="1" type="primary">dapF</name>
    <name type="ordered locus">HY04AAS1_1165</name>
</gene>
<sequence>MLITKYQGSGNDFIIIDNRDNFVYKEIEKLGLSINEFVRKLCEQHTSVGADGVILIEKARNTKNHFSWAFFNADGSAAEMCGNGSRCAARFAYEKDIAPKDIVFETIAGEIEAHIMDSKRVKVQLTPYHSHQKNIEIKTEYGTFKGHFVNTGVPHFVIFVDEDELDNLDVEKVGRAIRYHEYFAPKGTNVNFVAKTKNGSFRIRTYERGVEGETLACGTGSAACGINAYLLGLSASNIVDIITKSGELLKITIENDKVFLEGPTTKVFEGMLSYEIF</sequence>
<feature type="chain" id="PRO_1000099243" description="Diaminopimelate epimerase">
    <location>
        <begin position="1"/>
        <end position="277"/>
    </location>
</feature>
<feature type="active site" description="Proton donor" evidence="1">
    <location>
        <position position="81"/>
    </location>
</feature>
<feature type="active site" description="Proton acceptor" evidence="1">
    <location>
        <position position="217"/>
    </location>
</feature>
<feature type="binding site" evidence="1">
    <location>
        <position position="11"/>
    </location>
    <ligand>
        <name>substrate</name>
    </ligand>
</feature>
<feature type="binding site" evidence="1">
    <location>
        <position position="72"/>
    </location>
    <ligand>
        <name>substrate</name>
    </ligand>
</feature>
<feature type="binding site" evidence="1">
    <location>
        <begin position="82"/>
        <end position="83"/>
    </location>
    <ligand>
        <name>substrate</name>
    </ligand>
</feature>
<feature type="binding site" evidence="1">
    <location>
        <position position="189"/>
    </location>
    <ligand>
        <name>substrate</name>
    </ligand>
</feature>
<feature type="binding site" evidence="1">
    <location>
        <begin position="207"/>
        <end position="208"/>
    </location>
    <ligand>
        <name>substrate</name>
    </ligand>
</feature>
<feature type="binding site" evidence="1">
    <location>
        <begin position="218"/>
        <end position="219"/>
    </location>
    <ligand>
        <name>substrate</name>
    </ligand>
</feature>
<feature type="site" description="Could be important to modulate the pK values of the two catalytic cysteine residues" evidence="1">
    <location>
        <position position="155"/>
    </location>
</feature>
<feature type="site" description="Could be important to modulate the pK values of the two catalytic cysteine residues" evidence="1">
    <location>
        <position position="207"/>
    </location>
</feature>
<evidence type="ECO:0000255" key="1">
    <source>
        <dbReference type="HAMAP-Rule" id="MF_00197"/>
    </source>
</evidence>
<comment type="function">
    <text evidence="1">Catalyzes the stereoinversion of LL-2,6-diaminopimelate (L,L-DAP) to meso-diaminopimelate (meso-DAP), a precursor of L-lysine and an essential component of the bacterial peptidoglycan.</text>
</comment>
<comment type="catalytic activity">
    <reaction evidence="1">
        <text>(2S,6S)-2,6-diaminopimelate = meso-2,6-diaminopimelate</text>
        <dbReference type="Rhea" id="RHEA:15393"/>
        <dbReference type="ChEBI" id="CHEBI:57609"/>
        <dbReference type="ChEBI" id="CHEBI:57791"/>
        <dbReference type="EC" id="5.1.1.7"/>
    </reaction>
</comment>
<comment type="pathway">
    <text evidence="1">Amino-acid biosynthesis; L-lysine biosynthesis via DAP pathway; DL-2,6-diaminopimelate from LL-2,6-diaminopimelate: step 1/1.</text>
</comment>
<comment type="subunit">
    <text evidence="1">Homodimer.</text>
</comment>
<comment type="subcellular location">
    <subcellularLocation>
        <location evidence="1">Cytoplasm</location>
    </subcellularLocation>
</comment>
<comment type="similarity">
    <text evidence="1">Belongs to the diaminopimelate epimerase family.</text>
</comment>
<reference key="1">
    <citation type="journal article" date="2009" name="J. Bacteriol.">
        <title>Complete and draft genome sequences of six members of the Aquificales.</title>
        <authorList>
            <person name="Reysenbach A.-L."/>
            <person name="Hamamura N."/>
            <person name="Podar M."/>
            <person name="Griffiths E."/>
            <person name="Ferreira S."/>
            <person name="Hochstein R."/>
            <person name="Heidelberg J."/>
            <person name="Johnson J."/>
            <person name="Mead D."/>
            <person name="Pohorille A."/>
            <person name="Sarmiento M."/>
            <person name="Schweighofer K."/>
            <person name="Seshadri R."/>
            <person name="Voytek M.A."/>
        </authorList>
    </citation>
    <scope>NUCLEOTIDE SEQUENCE [LARGE SCALE GENOMIC DNA]</scope>
    <source>
        <strain>Y04AAS1</strain>
    </source>
</reference>
<protein>
    <recommendedName>
        <fullName evidence="1">Diaminopimelate epimerase</fullName>
        <shortName evidence="1">DAP epimerase</shortName>
        <ecNumber evidence="1">5.1.1.7</ecNumber>
    </recommendedName>
    <alternativeName>
        <fullName evidence="1">PLP-independent amino acid racemase</fullName>
    </alternativeName>
</protein>
<accession>B4U9P0</accession>
<organism>
    <name type="scientific">Hydrogenobaculum sp. (strain Y04AAS1)</name>
    <dbReference type="NCBI Taxonomy" id="380749"/>
    <lineage>
        <taxon>Bacteria</taxon>
        <taxon>Pseudomonadati</taxon>
        <taxon>Aquificota</taxon>
        <taxon>Aquificia</taxon>
        <taxon>Aquificales</taxon>
        <taxon>Aquificaceae</taxon>
        <taxon>Hydrogenobaculum</taxon>
    </lineage>
</organism>
<keyword id="KW-0028">Amino-acid biosynthesis</keyword>
<keyword id="KW-0963">Cytoplasm</keyword>
<keyword id="KW-0413">Isomerase</keyword>
<keyword id="KW-0457">Lysine biosynthesis</keyword>
<name>DAPF_HYDS0</name>
<proteinExistence type="inferred from homology"/>